<protein>
    <recommendedName>
        <fullName>Protein MGF 505-11L</fullName>
    </recommendedName>
</protein>
<keyword id="KW-0244">Early protein</keyword>
<name>50511_ASFM2</name>
<organism>
    <name type="scientific">African swine fever virus (isolate Tick/Malawi/Lil 20-1/1983)</name>
    <name type="common">ASFV</name>
    <dbReference type="NCBI Taxonomy" id="10500"/>
    <lineage>
        <taxon>Viruses</taxon>
        <taxon>Varidnaviria</taxon>
        <taxon>Bamfordvirae</taxon>
        <taxon>Nucleocytoviricota</taxon>
        <taxon>Pokkesviricetes</taxon>
        <taxon>Asfuvirales</taxon>
        <taxon>Asfarviridae</taxon>
        <taxon>Asfivirus</taxon>
        <taxon>African swine fever virus</taxon>
    </lineage>
</organism>
<comment type="function">
    <text evidence="1">Plays a role in virus cell tropism, and may be required for efficient virus replication in macrophages.</text>
</comment>
<comment type="induction">
    <text evidence="2">Expressed in the early phase of the viral replicative cycle.</text>
</comment>
<comment type="similarity">
    <text evidence="2">Belongs to the asfivirus MGF 505 family.</text>
</comment>
<sequence>MFSLQKKALQHIYMTPENASELSKDLLQHLGLYWNGPIIKMDTVVHLHNKIFSNRSVLKYALAKQANITIIETLVLWVEPEYALAQALKHNRKDVLECIFSYHLTTPKYHHIMHLTSSQELFEFFHLFICKSKNYHARMECLLYAATLYNFQNILEKNREYIIRHSIGNPLFAIACKERHINLIAWFVTAGVLDTYDDSTLFNTAFKLGDYSLLEVACDLPITYPDYLIISMMQTAIQKNYFRFFKKLLTHFSIYRPIIITDAAYYDRRKILLLLLNQNIFNNFTILCALSAAIKGHASKKTLNLLINRLDSQMTVIDSVYYSIIKYNNIDCIPLLMHIKTFRMETLISIAVHGDNIDIIAACKAFLPKDTLYHLVLKMAIILRNHKLFKLYTEKEHPMYIFTILKAIISDFINYTVFQALAIEYLCKFHQEKQLPIVPLLMVLAEHNYITKFKKTCYAANMSDQKVKRALIKCLFIATQKNYCQIFKYCFGSLLKVLSKHEQEKFFNSVVFAKKLASYYDHQNMIQLIDSLIERFRYLLKA</sequence>
<evidence type="ECO:0000250" key="1">
    <source>
        <dbReference type="UniProtKB" id="Q65208"/>
    </source>
</evidence>
<evidence type="ECO:0000305" key="2"/>
<accession>Q65259</accession>
<reference key="1">
    <citation type="journal article" date="1993" name="J. Gen. Virol.">
        <title>Duplicated genes within the variable right end of the genome of a pathogenic isolate of African swine fever virus.</title>
        <authorList>
            <person name="Vydelingum S."/>
            <person name="Baylis S.A."/>
            <person name="Bristow C."/>
            <person name="Smith G.L."/>
            <person name="Dixon L.K."/>
        </authorList>
    </citation>
    <scope>NUCLEOTIDE SEQUENCE [GENOMIC DNA]</scope>
</reference>
<reference key="2">
    <citation type="journal article" date="1994" name="J. Gen. Virol.">
        <title>Nucleotide sequence of a 55 kbp region from the right end of the genome of a pathogenic African swine fever virus isolate (Malawi LIL20/1).</title>
        <authorList>
            <person name="Dixon L.K."/>
            <person name="Twigg S.R.F."/>
            <person name="Baylis S.A."/>
            <person name="Vydelingum S."/>
            <person name="Bristow C."/>
            <person name="Hammond J.M."/>
            <person name="Smith G.L."/>
        </authorList>
    </citation>
    <scope>NUCLEOTIDE SEQUENCE [GENOMIC DNA]</scope>
</reference>
<reference key="3">
    <citation type="submission" date="2003-03" db="EMBL/GenBank/DDBJ databases">
        <title>African swine fever virus genomes.</title>
        <authorList>
            <person name="Kutish G.F."/>
            <person name="Rock D.L."/>
        </authorList>
    </citation>
    <scope>NUCLEOTIDE SEQUENCE [LARGE SCALE GENOMIC DNA]</scope>
</reference>
<dbReference type="EMBL" id="X71982">
    <property type="protein sequence ID" value="CAA50856.1"/>
    <property type="molecule type" value="Genomic_DNA"/>
</dbReference>
<dbReference type="EMBL" id="AY261361">
    <property type="status" value="NOT_ANNOTATED_CDS"/>
    <property type="molecule type" value="Genomic_DNA"/>
</dbReference>
<dbReference type="SMR" id="Q65259"/>
<dbReference type="Proteomes" id="UP000000860">
    <property type="component" value="Segment"/>
</dbReference>
<dbReference type="InterPro" id="IPR004858">
    <property type="entry name" value="MGF_505"/>
</dbReference>
<dbReference type="Pfam" id="PF03158">
    <property type="entry name" value="DUF249"/>
    <property type="match status" value="1"/>
</dbReference>
<proteinExistence type="inferred from homology"/>
<gene>
    <name type="ordered locus">Mal-157</name>
</gene>
<feature type="chain" id="PRO_0000373356" description="Protein MGF 505-11L">
    <location>
        <begin position="1"/>
        <end position="542"/>
    </location>
</feature>
<organismHost>
    <name type="scientific">Ornithodoros</name>
    <name type="common">relapsing fever ticks</name>
    <dbReference type="NCBI Taxonomy" id="6937"/>
</organismHost>
<organismHost>
    <name type="scientific">Phacochoerus aethiopicus</name>
    <name type="common">Warthog</name>
    <dbReference type="NCBI Taxonomy" id="85517"/>
</organismHost>
<organismHost>
    <name type="scientific">Phacochoerus africanus</name>
    <name type="common">Warthog</name>
    <dbReference type="NCBI Taxonomy" id="41426"/>
</organismHost>
<organismHost>
    <name type="scientific">Potamochoerus larvatus</name>
    <name type="common">Bushpig</name>
    <dbReference type="NCBI Taxonomy" id="273792"/>
</organismHost>
<organismHost>
    <name type="scientific">Sus scrofa</name>
    <name type="common">Pig</name>
    <dbReference type="NCBI Taxonomy" id="9823"/>
</organismHost>